<name>RNPH_KLEP7</name>
<reference key="1">
    <citation type="submission" date="2006-09" db="EMBL/GenBank/DDBJ databases">
        <authorList>
            <consortium name="The Klebsiella pneumonia Genome Sequencing Project"/>
            <person name="McClelland M."/>
            <person name="Sanderson E.K."/>
            <person name="Spieth J."/>
            <person name="Clifton W.S."/>
            <person name="Latreille P."/>
            <person name="Sabo A."/>
            <person name="Pepin K."/>
            <person name="Bhonagiri V."/>
            <person name="Porwollik S."/>
            <person name="Ali J."/>
            <person name="Wilson R.K."/>
        </authorList>
    </citation>
    <scope>NUCLEOTIDE SEQUENCE [LARGE SCALE GENOMIC DNA]</scope>
    <source>
        <strain>ATCC 700721 / MGH 78578</strain>
    </source>
</reference>
<keyword id="KW-0548">Nucleotidyltransferase</keyword>
<keyword id="KW-0694">RNA-binding</keyword>
<keyword id="KW-0698">rRNA processing</keyword>
<keyword id="KW-0808">Transferase</keyword>
<keyword id="KW-0819">tRNA processing</keyword>
<keyword id="KW-0820">tRNA-binding</keyword>
<sequence length="238" mass="25270">MRPAGRSANQVRPVTLTRNYTKHAEGSVLVEFGDTKVLCTASIDEGVPRFLKGQGQGWITAEYGMLPRSTHTRNAREAAKGKQGGRTMEIQRLIARALRAAVDLKALGEFTITLDCDVLQADGGTRTASITGACVALADALNKLVAAGKLKTNPMKGMVAAVSVGIVNGEAICDLEYIEDSAAETDMNVVMTEDGRIIEVQGTAEGEPFTHEELLTLLALARGGIESIITTQKAALEN</sequence>
<organism>
    <name type="scientific">Klebsiella pneumoniae subsp. pneumoniae (strain ATCC 700721 / MGH 78578)</name>
    <dbReference type="NCBI Taxonomy" id="272620"/>
    <lineage>
        <taxon>Bacteria</taxon>
        <taxon>Pseudomonadati</taxon>
        <taxon>Pseudomonadota</taxon>
        <taxon>Gammaproteobacteria</taxon>
        <taxon>Enterobacterales</taxon>
        <taxon>Enterobacteriaceae</taxon>
        <taxon>Klebsiella/Raoultella group</taxon>
        <taxon>Klebsiella</taxon>
        <taxon>Klebsiella pneumoniae complex</taxon>
    </lineage>
</organism>
<accession>A6TFN5</accession>
<protein>
    <recommendedName>
        <fullName evidence="1">Ribonuclease PH</fullName>
        <shortName evidence="1">RNase PH</shortName>
        <ecNumber evidence="1">2.7.7.56</ecNumber>
    </recommendedName>
    <alternativeName>
        <fullName evidence="1">tRNA nucleotidyltransferase</fullName>
    </alternativeName>
</protein>
<feature type="chain" id="PRO_1000024820" description="Ribonuclease PH">
    <location>
        <begin position="1"/>
        <end position="238"/>
    </location>
</feature>
<feature type="binding site" evidence="1">
    <location>
        <position position="86"/>
    </location>
    <ligand>
        <name>phosphate</name>
        <dbReference type="ChEBI" id="CHEBI:43474"/>
        <note>substrate</note>
    </ligand>
</feature>
<feature type="binding site" evidence="1">
    <location>
        <begin position="124"/>
        <end position="126"/>
    </location>
    <ligand>
        <name>phosphate</name>
        <dbReference type="ChEBI" id="CHEBI:43474"/>
        <note>substrate</note>
    </ligand>
</feature>
<dbReference type="EC" id="2.7.7.56" evidence="1"/>
<dbReference type="EMBL" id="CP000647">
    <property type="protein sequence ID" value="ABR79369.1"/>
    <property type="molecule type" value="Genomic_DNA"/>
</dbReference>
<dbReference type="RefSeq" id="WP_002922602.1">
    <property type="nucleotide sequence ID" value="NC_009648.1"/>
</dbReference>
<dbReference type="SMR" id="A6TFN5"/>
<dbReference type="STRING" id="272620.KPN_03984"/>
<dbReference type="jPOST" id="A6TFN5"/>
<dbReference type="PaxDb" id="272620-KPN_03984"/>
<dbReference type="EnsemblBacteria" id="ABR79369">
    <property type="protein sequence ID" value="ABR79369"/>
    <property type="gene ID" value="KPN_03984"/>
</dbReference>
<dbReference type="GeneID" id="93270691"/>
<dbReference type="KEGG" id="kpn:KPN_03984"/>
<dbReference type="HOGENOM" id="CLU_050858_0_0_6"/>
<dbReference type="Proteomes" id="UP000000265">
    <property type="component" value="Chromosome"/>
</dbReference>
<dbReference type="GO" id="GO:0000175">
    <property type="term" value="F:3'-5'-RNA exonuclease activity"/>
    <property type="evidence" value="ECO:0007669"/>
    <property type="project" value="UniProtKB-UniRule"/>
</dbReference>
<dbReference type="GO" id="GO:0000049">
    <property type="term" value="F:tRNA binding"/>
    <property type="evidence" value="ECO:0007669"/>
    <property type="project" value="UniProtKB-UniRule"/>
</dbReference>
<dbReference type="GO" id="GO:0009022">
    <property type="term" value="F:tRNA nucleotidyltransferase activity"/>
    <property type="evidence" value="ECO:0007669"/>
    <property type="project" value="UniProtKB-UniRule"/>
</dbReference>
<dbReference type="GO" id="GO:0016075">
    <property type="term" value="P:rRNA catabolic process"/>
    <property type="evidence" value="ECO:0007669"/>
    <property type="project" value="UniProtKB-UniRule"/>
</dbReference>
<dbReference type="GO" id="GO:0006364">
    <property type="term" value="P:rRNA processing"/>
    <property type="evidence" value="ECO:0007669"/>
    <property type="project" value="UniProtKB-KW"/>
</dbReference>
<dbReference type="GO" id="GO:0008033">
    <property type="term" value="P:tRNA processing"/>
    <property type="evidence" value="ECO:0007669"/>
    <property type="project" value="UniProtKB-UniRule"/>
</dbReference>
<dbReference type="CDD" id="cd11362">
    <property type="entry name" value="RNase_PH_bact"/>
    <property type="match status" value="1"/>
</dbReference>
<dbReference type="FunFam" id="3.30.230.70:FF:000003">
    <property type="entry name" value="Ribonuclease PH"/>
    <property type="match status" value="1"/>
</dbReference>
<dbReference type="Gene3D" id="3.30.230.70">
    <property type="entry name" value="GHMP Kinase, N-terminal domain"/>
    <property type="match status" value="1"/>
</dbReference>
<dbReference type="HAMAP" id="MF_00564">
    <property type="entry name" value="RNase_PH"/>
    <property type="match status" value="1"/>
</dbReference>
<dbReference type="InterPro" id="IPR001247">
    <property type="entry name" value="ExoRNase_PH_dom1"/>
</dbReference>
<dbReference type="InterPro" id="IPR015847">
    <property type="entry name" value="ExoRNase_PH_dom2"/>
</dbReference>
<dbReference type="InterPro" id="IPR036345">
    <property type="entry name" value="ExoRNase_PH_dom2_sf"/>
</dbReference>
<dbReference type="InterPro" id="IPR027408">
    <property type="entry name" value="PNPase/RNase_PH_dom_sf"/>
</dbReference>
<dbReference type="InterPro" id="IPR020568">
    <property type="entry name" value="Ribosomal_Su5_D2-typ_SF"/>
</dbReference>
<dbReference type="InterPro" id="IPR050080">
    <property type="entry name" value="RNase_PH"/>
</dbReference>
<dbReference type="InterPro" id="IPR002381">
    <property type="entry name" value="RNase_PH_bac-type"/>
</dbReference>
<dbReference type="InterPro" id="IPR018336">
    <property type="entry name" value="RNase_PH_CS"/>
</dbReference>
<dbReference type="NCBIfam" id="TIGR01966">
    <property type="entry name" value="RNasePH"/>
    <property type="match status" value="1"/>
</dbReference>
<dbReference type="PANTHER" id="PTHR11953">
    <property type="entry name" value="EXOSOME COMPLEX COMPONENT"/>
    <property type="match status" value="1"/>
</dbReference>
<dbReference type="PANTHER" id="PTHR11953:SF0">
    <property type="entry name" value="EXOSOME COMPLEX COMPONENT RRP41"/>
    <property type="match status" value="1"/>
</dbReference>
<dbReference type="Pfam" id="PF01138">
    <property type="entry name" value="RNase_PH"/>
    <property type="match status" value="1"/>
</dbReference>
<dbReference type="Pfam" id="PF03725">
    <property type="entry name" value="RNase_PH_C"/>
    <property type="match status" value="1"/>
</dbReference>
<dbReference type="SUPFAM" id="SSF55666">
    <property type="entry name" value="Ribonuclease PH domain 2-like"/>
    <property type="match status" value="1"/>
</dbReference>
<dbReference type="SUPFAM" id="SSF54211">
    <property type="entry name" value="Ribosomal protein S5 domain 2-like"/>
    <property type="match status" value="1"/>
</dbReference>
<dbReference type="PROSITE" id="PS01277">
    <property type="entry name" value="RIBONUCLEASE_PH"/>
    <property type="match status" value="1"/>
</dbReference>
<comment type="function">
    <text evidence="1">Phosphorolytic 3'-5' exoribonuclease that plays an important role in tRNA 3'-end maturation. Removes nucleotide residues following the 3'-CCA terminus of tRNAs; can also add nucleotides to the ends of RNA molecules by using nucleoside diphosphates as substrates, but this may not be physiologically important. Probably plays a role in initiation of 16S rRNA degradation (leading to ribosome degradation) during starvation.</text>
</comment>
<comment type="catalytic activity">
    <reaction evidence="1">
        <text>tRNA(n+1) + phosphate = tRNA(n) + a ribonucleoside 5'-diphosphate</text>
        <dbReference type="Rhea" id="RHEA:10628"/>
        <dbReference type="Rhea" id="RHEA-COMP:17343"/>
        <dbReference type="Rhea" id="RHEA-COMP:17344"/>
        <dbReference type="ChEBI" id="CHEBI:43474"/>
        <dbReference type="ChEBI" id="CHEBI:57930"/>
        <dbReference type="ChEBI" id="CHEBI:173114"/>
        <dbReference type="EC" id="2.7.7.56"/>
    </reaction>
</comment>
<comment type="subunit">
    <text evidence="1">Homohexameric ring arranged as a trimer of dimers.</text>
</comment>
<comment type="similarity">
    <text evidence="1">Belongs to the RNase PH family.</text>
</comment>
<evidence type="ECO:0000255" key="1">
    <source>
        <dbReference type="HAMAP-Rule" id="MF_00564"/>
    </source>
</evidence>
<gene>
    <name evidence="1" type="primary">rph</name>
    <name type="ordered locus">KPN78578_39450</name>
    <name type="ORF">KPN_03984</name>
</gene>
<proteinExistence type="inferred from homology"/>